<dbReference type="EC" id="2.7.7.60" evidence="1"/>
<dbReference type="EC" id="4.6.1.12" evidence="1"/>
<dbReference type="EMBL" id="CP000394">
    <property type="protein sequence ID" value="ABI61917.1"/>
    <property type="molecule type" value="Genomic_DNA"/>
</dbReference>
<dbReference type="RefSeq" id="WP_011631726.1">
    <property type="nucleotide sequence ID" value="NC_008343.2"/>
</dbReference>
<dbReference type="SMR" id="Q0BTD5"/>
<dbReference type="STRING" id="391165.GbCGDNIH1_1019"/>
<dbReference type="GeneID" id="69745278"/>
<dbReference type="KEGG" id="gbe:GbCGDNIH1_1019"/>
<dbReference type="eggNOG" id="COG0245">
    <property type="taxonomic scope" value="Bacteria"/>
</dbReference>
<dbReference type="eggNOG" id="COG1211">
    <property type="taxonomic scope" value="Bacteria"/>
</dbReference>
<dbReference type="HOGENOM" id="CLU_042800_2_5_5"/>
<dbReference type="OrthoDB" id="9804336at2"/>
<dbReference type="UniPathway" id="UPA00056">
    <property type="reaction ID" value="UER00093"/>
</dbReference>
<dbReference type="UniPathway" id="UPA00056">
    <property type="reaction ID" value="UER00095"/>
</dbReference>
<dbReference type="Proteomes" id="UP000001963">
    <property type="component" value="Chromosome"/>
</dbReference>
<dbReference type="GO" id="GO:0008685">
    <property type="term" value="F:2-C-methyl-D-erythritol 2,4-cyclodiphosphate synthase activity"/>
    <property type="evidence" value="ECO:0007669"/>
    <property type="project" value="UniProtKB-UniRule"/>
</dbReference>
<dbReference type="GO" id="GO:0050518">
    <property type="term" value="F:2-C-methyl-D-erythritol 4-phosphate cytidylyltransferase activity"/>
    <property type="evidence" value="ECO:0007669"/>
    <property type="project" value="UniProtKB-UniRule"/>
</dbReference>
<dbReference type="GO" id="GO:0046872">
    <property type="term" value="F:metal ion binding"/>
    <property type="evidence" value="ECO:0007669"/>
    <property type="project" value="UniProtKB-KW"/>
</dbReference>
<dbReference type="GO" id="GO:0019288">
    <property type="term" value="P:isopentenyl diphosphate biosynthetic process, methylerythritol 4-phosphate pathway"/>
    <property type="evidence" value="ECO:0007669"/>
    <property type="project" value="UniProtKB-UniRule"/>
</dbReference>
<dbReference type="GO" id="GO:0016114">
    <property type="term" value="P:terpenoid biosynthetic process"/>
    <property type="evidence" value="ECO:0007669"/>
    <property type="project" value="InterPro"/>
</dbReference>
<dbReference type="CDD" id="cd02516">
    <property type="entry name" value="CDP-ME_synthetase"/>
    <property type="match status" value="1"/>
</dbReference>
<dbReference type="CDD" id="cd00554">
    <property type="entry name" value="MECDP_synthase"/>
    <property type="match status" value="1"/>
</dbReference>
<dbReference type="FunFam" id="3.30.1330.50:FF:000001">
    <property type="entry name" value="2-C-methyl-D-erythritol 2,4-cyclodiphosphate synthase"/>
    <property type="match status" value="1"/>
</dbReference>
<dbReference type="FunFam" id="3.90.550.10:FF:000003">
    <property type="entry name" value="2-C-methyl-D-erythritol 4-phosphate cytidylyltransferase"/>
    <property type="match status" value="1"/>
</dbReference>
<dbReference type="Gene3D" id="3.30.1330.50">
    <property type="entry name" value="2-C-methyl-D-erythritol 2,4-cyclodiphosphate synthase"/>
    <property type="match status" value="1"/>
</dbReference>
<dbReference type="Gene3D" id="3.90.550.10">
    <property type="entry name" value="Spore Coat Polysaccharide Biosynthesis Protein SpsA, Chain A"/>
    <property type="match status" value="1"/>
</dbReference>
<dbReference type="HAMAP" id="MF_00108">
    <property type="entry name" value="IspD"/>
    <property type="match status" value="1"/>
</dbReference>
<dbReference type="HAMAP" id="MF_01520">
    <property type="entry name" value="IspDF"/>
    <property type="match status" value="1"/>
</dbReference>
<dbReference type="HAMAP" id="MF_00107">
    <property type="entry name" value="IspF"/>
    <property type="match status" value="1"/>
</dbReference>
<dbReference type="InterPro" id="IPR001228">
    <property type="entry name" value="IspD"/>
</dbReference>
<dbReference type="InterPro" id="IPR026596">
    <property type="entry name" value="IspD/F"/>
</dbReference>
<dbReference type="InterPro" id="IPR034683">
    <property type="entry name" value="IspD/TarI"/>
</dbReference>
<dbReference type="InterPro" id="IPR018294">
    <property type="entry name" value="ISPD_synthase_CS"/>
</dbReference>
<dbReference type="InterPro" id="IPR003526">
    <property type="entry name" value="MECDP_synthase"/>
</dbReference>
<dbReference type="InterPro" id="IPR020555">
    <property type="entry name" value="MECDP_synthase_CS"/>
</dbReference>
<dbReference type="InterPro" id="IPR036571">
    <property type="entry name" value="MECDP_synthase_sf"/>
</dbReference>
<dbReference type="InterPro" id="IPR029044">
    <property type="entry name" value="Nucleotide-diphossugar_trans"/>
</dbReference>
<dbReference type="NCBIfam" id="TIGR00453">
    <property type="entry name" value="ispD"/>
    <property type="match status" value="1"/>
</dbReference>
<dbReference type="NCBIfam" id="TIGR00151">
    <property type="entry name" value="ispF"/>
    <property type="match status" value="1"/>
</dbReference>
<dbReference type="NCBIfam" id="NF006899">
    <property type="entry name" value="PRK09382.1"/>
    <property type="match status" value="1"/>
</dbReference>
<dbReference type="PANTHER" id="PTHR43181">
    <property type="entry name" value="2-C-METHYL-D-ERYTHRITOL 2,4-CYCLODIPHOSPHATE SYNTHASE, CHLOROPLASTIC"/>
    <property type="match status" value="1"/>
</dbReference>
<dbReference type="PANTHER" id="PTHR43181:SF1">
    <property type="entry name" value="2-C-METHYL-D-ERYTHRITOL 2,4-CYCLODIPHOSPHATE SYNTHASE, CHLOROPLASTIC"/>
    <property type="match status" value="1"/>
</dbReference>
<dbReference type="Pfam" id="PF01128">
    <property type="entry name" value="IspD"/>
    <property type="match status" value="1"/>
</dbReference>
<dbReference type="Pfam" id="PF02542">
    <property type="entry name" value="YgbB"/>
    <property type="match status" value="1"/>
</dbReference>
<dbReference type="SUPFAM" id="SSF69765">
    <property type="entry name" value="IpsF-like"/>
    <property type="match status" value="1"/>
</dbReference>
<dbReference type="SUPFAM" id="SSF53448">
    <property type="entry name" value="Nucleotide-diphospho-sugar transferases"/>
    <property type="match status" value="1"/>
</dbReference>
<dbReference type="PROSITE" id="PS01295">
    <property type="entry name" value="ISPD"/>
    <property type="match status" value="1"/>
</dbReference>
<dbReference type="PROSITE" id="PS01350">
    <property type="entry name" value="ISPF"/>
    <property type="match status" value="1"/>
</dbReference>
<feature type="chain" id="PRO_0000296745" description="Bifunctional enzyme IspD/IspF">
    <location>
        <begin position="1"/>
        <end position="376"/>
    </location>
</feature>
<feature type="region of interest" description="2-C-methyl-D-erythritol 4-phosphate cytidylyltransferase" evidence="1">
    <location>
        <begin position="1"/>
        <end position="220"/>
    </location>
</feature>
<feature type="region of interest" description="2-C-methyl-D-erythritol 2,4-cyclodiphosphate synthase" evidence="1">
    <location>
        <begin position="220"/>
        <end position="376"/>
    </location>
</feature>
<feature type="binding site" evidence="1">
    <location>
        <begin position="226"/>
        <end position="228"/>
    </location>
    <ligand>
        <name>4-CDP-2-C-methyl-D-erythritol 2-phosphate</name>
        <dbReference type="ChEBI" id="CHEBI:57919"/>
    </ligand>
</feature>
<feature type="binding site" evidence="1">
    <location>
        <position position="226"/>
    </location>
    <ligand>
        <name>a divalent metal cation</name>
        <dbReference type="ChEBI" id="CHEBI:60240"/>
    </ligand>
</feature>
<feature type="binding site" evidence="1">
    <location>
        <position position="228"/>
    </location>
    <ligand>
        <name>a divalent metal cation</name>
        <dbReference type="ChEBI" id="CHEBI:60240"/>
    </ligand>
</feature>
<feature type="binding site" evidence="1">
    <location>
        <begin position="252"/>
        <end position="253"/>
    </location>
    <ligand>
        <name>4-CDP-2-C-methyl-D-erythritol 2-phosphate</name>
        <dbReference type="ChEBI" id="CHEBI:57919"/>
    </ligand>
</feature>
<feature type="binding site" evidence="1">
    <location>
        <position position="260"/>
    </location>
    <ligand>
        <name>a divalent metal cation</name>
        <dbReference type="ChEBI" id="CHEBI:60240"/>
    </ligand>
</feature>
<feature type="binding site" evidence="1">
    <location>
        <begin position="274"/>
        <end position="276"/>
    </location>
    <ligand>
        <name>4-CDP-2-C-methyl-D-erythritol 2-phosphate</name>
        <dbReference type="ChEBI" id="CHEBI:57919"/>
    </ligand>
</feature>
<feature type="binding site" evidence="1">
    <location>
        <begin position="350"/>
        <end position="353"/>
    </location>
    <ligand>
        <name>4-CDP-2-C-methyl-D-erythritol 2-phosphate</name>
        <dbReference type="ChEBI" id="CHEBI:57919"/>
    </ligand>
</feature>
<feature type="binding site" evidence="1">
    <location>
        <position position="357"/>
    </location>
    <ligand>
        <name>4-CDP-2-C-methyl-D-erythritol 2-phosphate</name>
        <dbReference type="ChEBI" id="CHEBI:57919"/>
    </ligand>
</feature>
<feature type="binding site" evidence="1">
    <location>
        <position position="360"/>
    </location>
    <ligand>
        <name>4-CDP-2-C-methyl-D-erythritol 2-phosphate</name>
        <dbReference type="ChEBI" id="CHEBI:57919"/>
    </ligand>
</feature>
<feature type="site" description="Transition state stabilizer" evidence="1">
    <location>
        <position position="15"/>
    </location>
</feature>
<feature type="site" description="Transition state stabilizer" evidence="1">
    <location>
        <position position="22"/>
    </location>
</feature>
<feature type="site" description="Positions MEP for the nucleophilic attack" evidence="1">
    <location>
        <position position="146"/>
    </location>
</feature>
<feature type="site" description="Positions MEP for the nucleophilic attack" evidence="1">
    <location>
        <position position="199"/>
    </location>
</feature>
<feature type="site" description="Transition state stabilizer" evidence="1">
    <location>
        <position position="252"/>
    </location>
</feature>
<feature type="site" description="Transition state stabilizer" evidence="1">
    <location>
        <position position="351"/>
    </location>
</feature>
<organism>
    <name type="scientific">Granulibacter bethesdensis (strain ATCC BAA-1260 / CGDNIH1)</name>
    <dbReference type="NCBI Taxonomy" id="391165"/>
    <lineage>
        <taxon>Bacteria</taxon>
        <taxon>Pseudomonadati</taxon>
        <taxon>Pseudomonadota</taxon>
        <taxon>Alphaproteobacteria</taxon>
        <taxon>Acetobacterales</taxon>
        <taxon>Acetobacteraceae</taxon>
        <taxon>Granulibacter</taxon>
    </lineage>
</organism>
<protein>
    <recommendedName>
        <fullName evidence="1">Bifunctional enzyme IspD/IspF</fullName>
    </recommendedName>
    <domain>
        <recommendedName>
            <fullName evidence="1">2-C-methyl-D-erythritol 4-phosphate cytidylyltransferase</fullName>
            <ecNumber evidence="1">2.7.7.60</ecNumber>
        </recommendedName>
        <alternativeName>
            <fullName evidence="1">4-diphosphocytidyl-2C-methyl-D-erythritol synthase</fullName>
        </alternativeName>
        <alternativeName>
            <fullName evidence="1">MEP cytidylyltransferase</fullName>
            <shortName evidence="1">MCT</shortName>
        </alternativeName>
    </domain>
    <domain>
        <recommendedName>
            <fullName evidence="1">2-C-methyl-D-erythritol 2,4-cyclodiphosphate synthase</fullName>
            <shortName evidence="1">MECDP-synthase</shortName>
            <shortName evidence="1">MECPP-synthase</shortName>
            <shortName evidence="1">MECPS</shortName>
            <ecNumber evidence="1">4.6.1.12</ecNumber>
        </recommendedName>
    </domain>
</protein>
<proteinExistence type="inferred from homology"/>
<accession>Q0BTD5</accession>
<sequence>MRIAAILVAGGSGSRFGSDIPKQFLPVGGKPLIRHGAERLSAKVDLLQPVGCADDIAPLLQGLDHLPIVDGGKERQDSVRAGLEALVPYAPDIVLIHDAARPYFPDHTIEDLIEALQIHDGAIPAVPVADTLKRAAGNIIDSTVPREGLYRAQTPQAFKFSVLLALHRDHPGGATDDAALLDQAGHSVALVPGAEDNIKVTYPADLARVERSMSISMIPRIGTGYDVHAFETGRKLILCGIEVPHHQGLAGHSDADVGIHALCDAIYGALAEGDIGRHFPPTEASWKDADSARFLRHAAERIAARGGFLANADLTLICEKPKITPHAPAMIARLAELLGVSIDKISVKATTSEKLGFTGREEGIAAQAAVIIMIPA</sequence>
<reference key="1">
    <citation type="journal article" date="2007" name="J. Bacteriol.">
        <title>Genome sequence analysis of the emerging human pathogenic acetic acid bacterium Granulibacter bethesdensis.</title>
        <authorList>
            <person name="Greenberg D.E."/>
            <person name="Porcella S.F."/>
            <person name="Zelazny A.M."/>
            <person name="Virtaneva K."/>
            <person name="Sturdevant D.E."/>
            <person name="Kupko J.J. III"/>
            <person name="Barbian K.D."/>
            <person name="Babar A."/>
            <person name="Dorward D.W."/>
            <person name="Holland S.M."/>
        </authorList>
    </citation>
    <scope>NUCLEOTIDE SEQUENCE [LARGE SCALE GENOMIC DNA]</scope>
    <source>
        <strain>ATCC BAA-1260 / CGDNIH1</strain>
    </source>
</reference>
<comment type="function">
    <text evidence="1">Bifunctional enzyme that catalyzes the formation of 4-diphosphocytidyl-2-C-methyl-D-erythritol from CTP and 2-C-methyl-D-erythritol 4-phosphate (MEP) (IspD), and catalyzes the conversion of 4-diphosphocytidyl-2-C-methyl-D-erythritol 2-phosphate (CDP-ME2P) to 2-C-methyl-D-erythritol 2,4-cyclodiphosphate (ME-CPP) with a corresponding release of cytidine 5-monophosphate (CMP) (IspF).</text>
</comment>
<comment type="catalytic activity">
    <reaction evidence="1">
        <text>2-C-methyl-D-erythritol 4-phosphate + CTP + H(+) = 4-CDP-2-C-methyl-D-erythritol + diphosphate</text>
        <dbReference type="Rhea" id="RHEA:13429"/>
        <dbReference type="ChEBI" id="CHEBI:15378"/>
        <dbReference type="ChEBI" id="CHEBI:33019"/>
        <dbReference type="ChEBI" id="CHEBI:37563"/>
        <dbReference type="ChEBI" id="CHEBI:57823"/>
        <dbReference type="ChEBI" id="CHEBI:58262"/>
        <dbReference type="EC" id="2.7.7.60"/>
    </reaction>
</comment>
<comment type="catalytic activity">
    <reaction evidence="1">
        <text>4-CDP-2-C-methyl-D-erythritol 2-phosphate = 2-C-methyl-D-erythritol 2,4-cyclic diphosphate + CMP</text>
        <dbReference type="Rhea" id="RHEA:23864"/>
        <dbReference type="ChEBI" id="CHEBI:57919"/>
        <dbReference type="ChEBI" id="CHEBI:58483"/>
        <dbReference type="ChEBI" id="CHEBI:60377"/>
        <dbReference type="EC" id="4.6.1.12"/>
    </reaction>
</comment>
<comment type="cofactor">
    <cofactor evidence="1">
        <name>a divalent metal cation</name>
        <dbReference type="ChEBI" id="CHEBI:60240"/>
    </cofactor>
</comment>
<comment type="pathway">
    <text evidence="1">Isoprenoid biosynthesis; isopentenyl diphosphate biosynthesis via DXP pathway; isopentenyl diphosphate from 1-deoxy-D-xylulose 5-phosphate: step 2/6.</text>
</comment>
<comment type="pathway">
    <text evidence="1">Isoprenoid biosynthesis; isopentenyl diphosphate biosynthesis via DXP pathway; isopentenyl diphosphate from 1-deoxy-D-xylulose 5-phosphate: step 4/6.</text>
</comment>
<comment type="similarity">
    <text evidence="1">In the N-terminal section; belongs to the IspD/TarI cytidylyltransferase family. IspD subfamily.</text>
</comment>
<comment type="similarity">
    <text evidence="1">In the C-terminal section; belongs to the IspF family.</text>
</comment>
<evidence type="ECO:0000255" key="1">
    <source>
        <dbReference type="HAMAP-Rule" id="MF_01520"/>
    </source>
</evidence>
<keyword id="KW-0414">Isoprene biosynthesis</keyword>
<keyword id="KW-0456">Lyase</keyword>
<keyword id="KW-0479">Metal-binding</keyword>
<keyword id="KW-0511">Multifunctional enzyme</keyword>
<keyword id="KW-0548">Nucleotidyltransferase</keyword>
<keyword id="KW-1185">Reference proteome</keyword>
<keyword id="KW-0808">Transferase</keyword>
<name>ISPDF_GRABC</name>
<gene>
    <name evidence="1" type="primary">ispDF</name>
    <name type="ordered locus">GbCGDNIH1_1019</name>
</gene>